<comment type="function">
    <text evidence="4">Catalyzes the NADPH-dependent reduction of glyoxylate to glycolate as well as succinic semialdehyde (SSA) to gamma-hydroxybutyrate in vitro. May function in redox homeostasis and play a role in oxidative stress tolerance by detoxifying glyoxylate and SSA generated in glycolate metabolism and GABA metabolism, respectively.</text>
</comment>
<comment type="catalytic activity">
    <reaction evidence="4">
        <text>glycolate + NADP(+) = glyoxylate + NADPH + H(+)</text>
        <dbReference type="Rhea" id="RHEA:10992"/>
        <dbReference type="ChEBI" id="CHEBI:15378"/>
        <dbReference type="ChEBI" id="CHEBI:29805"/>
        <dbReference type="ChEBI" id="CHEBI:36655"/>
        <dbReference type="ChEBI" id="CHEBI:57783"/>
        <dbReference type="ChEBI" id="CHEBI:58349"/>
        <dbReference type="EC" id="1.1.1.79"/>
    </reaction>
</comment>
<comment type="catalytic activity">
    <reaction evidence="4">
        <text>4-hydroxybutanoate + NADP(+) = succinate semialdehyde + NADPH + H(+)</text>
        <dbReference type="Rhea" id="RHEA:26381"/>
        <dbReference type="ChEBI" id="CHEBI:15378"/>
        <dbReference type="ChEBI" id="CHEBI:16724"/>
        <dbReference type="ChEBI" id="CHEBI:57706"/>
        <dbReference type="ChEBI" id="CHEBI:57783"/>
        <dbReference type="ChEBI" id="CHEBI:58349"/>
        <dbReference type="EC" id="1.1.1.n11"/>
    </reaction>
</comment>
<comment type="activity regulation">
    <text evidence="7">The ratio of NADPH/NADP(+) may regulate enzymatic activity.</text>
</comment>
<comment type="biophysicochemical properties">
    <kinetics>
        <KM evidence="4">34 uM for glyoxylate (check for NADPH)</KM>
        <KM evidence="4">8.96 mM for succinate semialdehyde</KM>
        <KM evidence="4">34 uM for NADPH (in the presence of glyoxylate as cosubstrate)</KM>
        <KM evidence="4">12 uM for NADPH (in the presence of succinate semialdehyde as cosubstrate)</KM>
        <Vmax evidence="4">40.6 umol/min/mg enzyme toward glyoxylate</Vmax>
        <Vmax evidence="4">30.7 umol/min/mg enzyme toward succinate semialdehyde</Vmax>
    </kinetics>
    <phDependence>
        <text evidence="4">Optimum pH is 6.8-7.8.</text>
    </phDependence>
</comment>
<comment type="interaction">
    <interactant intactId="EBI-4453651">
        <id>F4I907</id>
    </interactant>
    <interactant intactId="EBI-4429250">
        <id>Q9LPR8</id>
        <label>SCL3</label>
    </interactant>
    <organismsDiffer>false</organismsDiffer>
    <experiments>3</experiments>
</comment>
<comment type="subcellular location">
    <subcellularLocation>
        <location evidence="8">Plastid</location>
        <location evidence="8">Chloroplast stroma</location>
    </subcellularLocation>
</comment>
<comment type="induction">
    <text evidence="5 6">By cold and heat stresses. Down-regulated by ozone.</text>
</comment>
<comment type="miscellaneous">
    <text>Although GLYR2 acts as an aldo/keto reductase, it has no significant homology with either mammalian and bacterial NADPH-dependent SSA reductases.</text>
</comment>
<comment type="similarity">
    <text evidence="7">Belongs to the HIBADH-related family. NP60 subfamily.</text>
</comment>
<accession>F4I907</accession>
<accession>Q8RWF1</accession>
<dbReference type="EC" id="1.1.1.79" evidence="4"/>
<dbReference type="EC" id="1.1.1.n11" evidence="4"/>
<dbReference type="EMBL" id="AC034257">
    <property type="status" value="NOT_ANNOTATED_CDS"/>
    <property type="molecule type" value="Genomic_DNA"/>
</dbReference>
<dbReference type="EMBL" id="CP002684">
    <property type="protein sequence ID" value="AEE29618.1"/>
    <property type="molecule type" value="Genomic_DNA"/>
</dbReference>
<dbReference type="EMBL" id="AY085690">
    <property type="protein sequence ID" value="AAM62909.1"/>
    <property type="molecule type" value="mRNA"/>
</dbReference>
<dbReference type="EMBL" id="AY093135">
    <property type="protein sequence ID" value="AAM13134.1"/>
    <property type="molecule type" value="mRNA"/>
</dbReference>
<dbReference type="EMBL" id="BT008734">
    <property type="protein sequence ID" value="AAP42747.1"/>
    <property type="molecule type" value="mRNA"/>
</dbReference>
<dbReference type="RefSeq" id="NP_564030.2">
    <property type="nucleotide sequence ID" value="NM_101628.4"/>
</dbReference>
<dbReference type="SMR" id="F4I907"/>
<dbReference type="BioGRID" id="23582">
    <property type="interactions" value="7"/>
</dbReference>
<dbReference type="FunCoup" id="F4I907">
    <property type="interactions" value="5022"/>
</dbReference>
<dbReference type="IntAct" id="F4I907">
    <property type="interactions" value="2"/>
</dbReference>
<dbReference type="STRING" id="3702.F4I907"/>
<dbReference type="iPTMnet" id="F4I907"/>
<dbReference type="MetOSite" id="F4I907"/>
<dbReference type="PaxDb" id="3702-AT1G17650.1"/>
<dbReference type="ProteomicsDB" id="248531"/>
<dbReference type="EnsemblPlants" id="AT1G17650.1">
    <property type="protein sequence ID" value="AT1G17650.1"/>
    <property type="gene ID" value="AT1G17650"/>
</dbReference>
<dbReference type="GeneID" id="838342"/>
<dbReference type="Gramene" id="AT1G17650.1">
    <property type="protein sequence ID" value="AT1G17650.1"/>
    <property type="gene ID" value="AT1G17650"/>
</dbReference>
<dbReference type="KEGG" id="ath:AT1G17650"/>
<dbReference type="Araport" id="AT1G17650"/>
<dbReference type="TAIR" id="AT1G17650">
    <property type="gene designation" value="GLYR2"/>
</dbReference>
<dbReference type="eggNOG" id="KOG0409">
    <property type="taxonomic scope" value="Eukaryota"/>
</dbReference>
<dbReference type="HOGENOM" id="CLU_035117_0_0_1"/>
<dbReference type="InParanoid" id="F4I907"/>
<dbReference type="OrthoDB" id="435038at2759"/>
<dbReference type="BRENDA" id="1.1.1.79">
    <property type="organism ID" value="399"/>
</dbReference>
<dbReference type="SABIO-RK" id="F4I907"/>
<dbReference type="PRO" id="PR:F4I907"/>
<dbReference type="Proteomes" id="UP000006548">
    <property type="component" value="Chromosome 1"/>
</dbReference>
<dbReference type="ExpressionAtlas" id="F4I907">
    <property type="expression patterns" value="baseline and differential"/>
</dbReference>
<dbReference type="GO" id="GO:0009507">
    <property type="term" value="C:chloroplast"/>
    <property type="evidence" value="ECO:0000314"/>
    <property type="project" value="TAIR"/>
</dbReference>
<dbReference type="GO" id="GO:0009570">
    <property type="term" value="C:chloroplast stroma"/>
    <property type="evidence" value="ECO:0007005"/>
    <property type="project" value="TAIR"/>
</dbReference>
<dbReference type="GO" id="GO:0030267">
    <property type="term" value="F:glyoxylate reductase (NADPH) activity"/>
    <property type="evidence" value="ECO:0000314"/>
    <property type="project" value="TAIR"/>
</dbReference>
<dbReference type="GO" id="GO:0051287">
    <property type="term" value="F:NAD binding"/>
    <property type="evidence" value="ECO:0007669"/>
    <property type="project" value="InterPro"/>
</dbReference>
<dbReference type="GO" id="GO:0050661">
    <property type="term" value="F:NADP binding"/>
    <property type="evidence" value="ECO:0007669"/>
    <property type="project" value="InterPro"/>
</dbReference>
<dbReference type="FunFam" id="1.10.1040.10:FF:000016">
    <property type="entry name" value="Glyoxylate/succinic semialdehyde reductase 2"/>
    <property type="match status" value="1"/>
</dbReference>
<dbReference type="FunFam" id="3.40.50.720:FF:000058">
    <property type="entry name" value="Putative oxidoreductase GLYR1 homolog"/>
    <property type="match status" value="1"/>
</dbReference>
<dbReference type="Gene3D" id="1.10.1040.10">
    <property type="entry name" value="N-(1-d-carboxylethyl)-l-norvaline Dehydrogenase, domain 2"/>
    <property type="match status" value="1"/>
</dbReference>
<dbReference type="Gene3D" id="3.40.50.720">
    <property type="entry name" value="NAD(P)-binding Rossmann-like Domain"/>
    <property type="match status" value="1"/>
</dbReference>
<dbReference type="InterPro" id="IPR008927">
    <property type="entry name" value="6-PGluconate_DH-like_C_sf"/>
</dbReference>
<dbReference type="InterPro" id="IPR013328">
    <property type="entry name" value="6PGD_dom2"/>
</dbReference>
<dbReference type="InterPro" id="IPR006115">
    <property type="entry name" value="6PGDH_NADP-bd"/>
</dbReference>
<dbReference type="InterPro" id="IPR029154">
    <property type="entry name" value="HIBADH-like_NADP-bd"/>
</dbReference>
<dbReference type="InterPro" id="IPR051265">
    <property type="entry name" value="HIBADH-related_NP60_sf"/>
</dbReference>
<dbReference type="InterPro" id="IPR036291">
    <property type="entry name" value="NAD(P)-bd_dom_sf"/>
</dbReference>
<dbReference type="PANTHER" id="PTHR43580:SF2">
    <property type="entry name" value="CYTOKINE-LIKE NUCLEAR FACTOR N-PAC"/>
    <property type="match status" value="1"/>
</dbReference>
<dbReference type="PANTHER" id="PTHR43580">
    <property type="entry name" value="OXIDOREDUCTASE GLYR1-RELATED"/>
    <property type="match status" value="1"/>
</dbReference>
<dbReference type="Pfam" id="PF14833">
    <property type="entry name" value="NAD_binding_11"/>
    <property type="match status" value="1"/>
</dbReference>
<dbReference type="Pfam" id="PF03446">
    <property type="entry name" value="NAD_binding_2"/>
    <property type="match status" value="1"/>
</dbReference>
<dbReference type="SUPFAM" id="SSF48179">
    <property type="entry name" value="6-phosphogluconate dehydrogenase C-terminal domain-like"/>
    <property type="match status" value="1"/>
</dbReference>
<dbReference type="SUPFAM" id="SSF51735">
    <property type="entry name" value="NAD(P)-binding Rossmann-fold domains"/>
    <property type="match status" value="1"/>
</dbReference>
<organism>
    <name type="scientific">Arabidopsis thaliana</name>
    <name type="common">Mouse-ear cress</name>
    <dbReference type="NCBI Taxonomy" id="3702"/>
    <lineage>
        <taxon>Eukaryota</taxon>
        <taxon>Viridiplantae</taxon>
        <taxon>Streptophyta</taxon>
        <taxon>Embryophyta</taxon>
        <taxon>Tracheophyta</taxon>
        <taxon>Spermatophyta</taxon>
        <taxon>Magnoliopsida</taxon>
        <taxon>eudicotyledons</taxon>
        <taxon>Gunneridae</taxon>
        <taxon>Pentapetalae</taxon>
        <taxon>rosids</taxon>
        <taxon>malvids</taxon>
        <taxon>Brassicales</taxon>
        <taxon>Brassicaceae</taxon>
        <taxon>Camelineae</taxon>
        <taxon>Arabidopsis</taxon>
    </lineage>
</organism>
<protein>
    <recommendedName>
        <fullName>Glyoxylate/succinic semialdehyde reductase 2, chloroplastic</fullName>
        <shortName>AtGLYR2</shortName>
        <shortName>AtGR2</shortName>
        <shortName>SSA reductase 2</shortName>
        <ecNumber evidence="4">1.1.1.79</ecNumber>
        <ecNumber evidence="4">1.1.1.n11</ecNumber>
    </recommendedName>
</protein>
<proteinExistence type="evidence at protein level"/>
<gene>
    <name type="primary">GLYR2</name>
    <name type="synonym">GR2</name>
    <name type="ordered locus">At1g17650</name>
    <name type="ORF">F11A6.12</name>
</gene>
<keyword id="KW-0150">Chloroplast</keyword>
<keyword id="KW-0520">NAD</keyword>
<keyword id="KW-0521">NADP</keyword>
<keyword id="KW-0560">Oxidoreductase</keyword>
<keyword id="KW-0934">Plastid</keyword>
<keyword id="KW-1185">Reference proteome</keyword>
<keyword id="KW-0346">Stress response</keyword>
<keyword id="KW-0809">Transit peptide</keyword>
<sequence>MPLVSLSFASSSSKAMALCSICPRIPLRFRPKPISPFLSKPQICLAYRVYSSLQSTTPSTRDELGTVSIGFLGMGIMGSPMAQNLIKAGCDVTVWNRTKSKCDPLVGLGAKYKSSPEEVTATCDLTFAMLADPESAIDVACGKNGAIFGISSGKGYVDVSTVDVASSILISKQIKDTGALFLEAPVSGSKKPAEDGQLIFLTAGDKPLYEKAAPFLDIMGKSKFYLGEVGNGAAMKLVVNMIMGSMMASFAEGILLSQKVGLDPNVLVEVVSQGAINAPMYSLKGPSMIKSVYPTAFPLKHQQKDMRLALGLAESVSQSTPIAAAANELYKVAKSYGLSDEDFSAVIEALKAAKSREA</sequence>
<evidence type="ECO:0000250" key="1"/>
<evidence type="ECO:0000250" key="2">
    <source>
        <dbReference type="UniProtKB" id="Q49A26"/>
    </source>
</evidence>
<evidence type="ECO:0000255" key="3"/>
<evidence type="ECO:0000269" key="4">
    <source>
    </source>
</evidence>
<evidence type="ECO:0000269" key="5">
    <source>
    </source>
</evidence>
<evidence type="ECO:0000269" key="6">
    <source>
    </source>
</evidence>
<evidence type="ECO:0000305" key="7"/>
<evidence type="ECO:0000305" key="8">
    <source>
    </source>
</evidence>
<reference key="1">
    <citation type="journal article" date="2000" name="Nature">
        <title>Sequence and analysis of chromosome 1 of the plant Arabidopsis thaliana.</title>
        <authorList>
            <person name="Theologis A."/>
            <person name="Ecker J.R."/>
            <person name="Palm C.J."/>
            <person name="Federspiel N.A."/>
            <person name="Kaul S."/>
            <person name="White O."/>
            <person name="Alonso J."/>
            <person name="Altafi H."/>
            <person name="Araujo R."/>
            <person name="Bowman C.L."/>
            <person name="Brooks S.Y."/>
            <person name="Buehler E."/>
            <person name="Chan A."/>
            <person name="Chao Q."/>
            <person name="Chen H."/>
            <person name="Cheuk R.F."/>
            <person name="Chin C.W."/>
            <person name="Chung M.K."/>
            <person name="Conn L."/>
            <person name="Conway A.B."/>
            <person name="Conway A.R."/>
            <person name="Creasy T.H."/>
            <person name="Dewar K."/>
            <person name="Dunn P."/>
            <person name="Etgu P."/>
            <person name="Feldblyum T.V."/>
            <person name="Feng J.-D."/>
            <person name="Fong B."/>
            <person name="Fujii C.Y."/>
            <person name="Gill J.E."/>
            <person name="Goldsmith A.D."/>
            <person name="Haas B."/>
            <person name="Hansen N.F."/>
            <person name="Hughes B."/>
            <person name="Huizar L."/>
            <person name="Hunter J.L."/>
            <person name="Jenkins J."/>
            <person name="Johnson-Hopson C."/>
            <person name="Khan S."/>
            <person name="Khaykin E."/>
            <person name="Kim C.J."/>
            <person name="Koo H.L."/>
            <person name="Kremenetskaia I."/>
            <person name="Kurtz D.B."/>
            <person name="Kwan A."/>
            <person name="Lam B."/>
            <person name="Langin-Hooper S."/>
            <person name="Lee A."/>
            <person name="Lee J.M."/>
            <person name="Lenz C.A."/>
            <person name="Li J.H."/>
            <person name="Li Y.-P."/>
            <person name="Lin X."/>
            <person name="Liu S.X."/>
            <person name="Liu Z.A."/>
            <person name="Luros J.S."/>
            <person name="Maiti R."/>
            <person name="Marziali A."/>
            <person name="Militscher J."/>
            <person name="Miranda M."/>
            <person name="Nguyen M."/>
            <person name="Nierman W.C."/>
            <person name="Osborne B.I."/>
            <person name="Pai G."/>
            <person name="Peterson J."/>
            <person name="Pham P.K."/>
            <person name="Rizzo M."/>
            <person name="Rooney T."/>
            <person name="Rowley D."/>
            <person name="Sakano H."/>
            <person name="Salzberg S.L."/>
            <person name="Schwartz J.R."/>
            <person name="Shinn P."/>
            <person name="Southwick A.M."/>
            <person name="Sun H."/>
            <person name="Tallon L.J."/>
            <person name="Tambunga G."/>
            <person name="Toriumi M.J."/>
            <person name="Town C.D."/>
            <person name="Utterback T."/>
            <person name="Van Aken S."/>
            <person name="Vaysberg M."/>
            <person name="Vysotskaia V.S."/>
            <person name="Walker M."/>
            <person name="Wu D."/>
            <person name="Yu G."/>
            <person name="Fraser C.M."/>
            <person name="Venter J.C."/>
            <person name="Davis R.W."/>
        </authorList>
    </citation>
    <scope>NUCLEOTIDE SEQUENCE [LARGE SCALE GENOMIC DNA]</scope>
    <source>
        <strain>cv. Columbia</strain>
    </source>
</reference>
<reference key="2">
    <citation type="journal article" date="2017" name="Plant J.">
        <title>Araport11: a complete reannotation of the Arabidopsis thaliana reference genome.</title>
        <authorList>
            <person name="Cheng C.Y."/>
            <person name="Krishnakumar V."/>
            <person name="Chan A.P."/>
            <person name="Thibaud-Nissen F."/>
            <person name="Schobel S."/>
            <person name="Town C.D."/>
        </authorList>
    </citation>
    <scope>GENOME REANNOTATION</scope>
    <source>
        <strain>cv. Columbia</strain>
    </source>
</reference>
<reference key="3">
    <citation type="submission" date="2002-03" db="EMBL/GenBank/DDBJ databases">
        <title>Full-length cDNA from Arabidopsis thaliana.</title>
        <authorList>
            <person name="Brover V.V."/>
            <person name="Troukhan M.E."/>
            <person name="Alexandrov N.A."/>
            <person name="Lu Y.-P."/>
            <person name="Flavell R.B."/>
            <person name="Feldmann K.A."/>
        </authorList>
    </citation>
    <scope>NUCLEOTIDE SEQUENCE [LARGE SCALE MRNA] OF 6-358</scope>
</reference>
<reference key="4">
    <citation type="journal article" date="2003" name="Science">
        <title>Empirical analysis of transcriptional activity in the Arabidopsis genome.</title>
        <authorList>
            <person name="Yamada K."/>
            <person name="Lim J."/>
            <person name="Dale J.M."/>
            <person name="Chen H."/>
            <person name="Shinn P."/>
            <person name="Palm C.J."/>
            <person name="Southwick A.M."/>
            <person name="Wu H.C."/>
            <person name="Kim C.J."/>
            <person name="Nguyen M."/>
            <person name="Pham P.K."/>
            <person name="Cheuk R.F."/>
            <person name="Karlin-Newmann G."/>
            <person name="Liu S.X."/>
            <person name="Lam B."/>
            <person name="Sakano H."/>
            <person name="Wu T."/>
            <person name="Yu G."/>
            <person name="Miranda M."/>
            <person name="Quach H.L."/>
            <person name="Tripp M."/>
            <person name="Chang C.H."/>
            <person name="Lee J.M."/>
            <person name="Toriumi M.J."/>
            <person name="Chan M.M."/>
            <person name="Tang C.C."/>
            <person name="Onodera C.S."/>
            <person name="Deng J.M."/>
            <person name="Akiyama K."/>
            <person name="Ansari Y."/>
            <person name="Arakawa T."/>
            <person name="Banh J."/>
            <person name="Banno F."/>
            <person name="Bowser L."/>
            <person name="Brooks S.Y."/>
            <person name="Carninci P."/>
            <person name="Chao Q."/>
            <person name="Choy N."/>
            <person name="Enju A."/>
            <person name="Goldsmith A.D."/>
            <person name="Gurjal M."/>
            <person name="Hansen N.F."/>
            <person name="Hayashizaki Y."/>
            <person name="Johnson-Hopson C."/>
            <person name="Hsuan V.W."/>
            <person name="Iida K."/>
            <person name="Karnes M."/>
            <person name="Khan S."/>
            <person name="Koesema E."/>
            <person name="Ishida J."/>
            <person name="Jiang P.X."/>
            <person name="Jones T."/>
            <person name="Kawai J."/>
            <person name="Kamiya A."/>
            <person name="Meyers C."/>
            <person name="Nakajima M."/>
            <person name="Narusaka M."/>
            <person name="Seki M."/>
            <person name="Sakurai T."/>
            <person name="Satou M."/>
            <person name="Tamse R."/>
            <person name="Vaysberg M."/>
            <person name="Wallender E.K."/>
            <person name="Wong C."/>
            <person name="Yamamura Y."/>
            <person name="Yuan S."/>
            <person name="Shinozaki K."/>
            <person name="Davis R.W."/>
            <person name="Theologis A."/>
            <person name="Ecker J.R."/>
        </authorList>
    </citation>
    <scope>NUCLEOTIDE SEQUENCE [LARGE SCALE MRNA] OF 10-358 AND 16-358</scope>
    <source>
        <strain>cv. Columbia</strain>
    </source>
</reference>
<reference key="5">
    <citation type="journal article" date="2008" name="J. Exp. Bot.">
        <title>Identification and characterization of a plastid-localized Arabidopsis glyoxylate reductase isoform: comparison with a cytosolic isoform and implications for cellular redox homeostasis and aldehyde detoxification.</title>
        <authorList>
            <person name="Simpson J.P."/>
            <person name="Di Leo R."/>
            <person name="Dhanoa P.K."/>
            <person name="Allan W.L."/>
            <person name="Makhmoudova A."/>
            <person name="Clark S.M."/>
            <person name="Hoover G.J."/>
            <person name="Mullen R.T."/>
            <person name="Shelp B.J."/>
        </authorList>
    </citation>
    <scope>FUNCTION</scope>
    <scope>CATALYTIC ACTIVITY</scope>
    <scope>BIOPHYSICOCHEMICAL PROPERTIES</scope>
    <scope>SUBCELLULAR LOCATION</scope>
</reference>
<reference key="6">
    <citation type="journal article" date="2008" name="J. Exp. Bot.">
        <title>Gamma-hydroxybutyrate accumulation in Arabidopsis and tobacco plants is a general response to abiotic stress: putative regulation by redox balance and glyoxylate reductase isoforms.</title>
        <authorList>
            <person name="Allan W.L."/>
            <person name="Simpson J.P."/>
            <person name="Clark S.M."/>
            <person name="Shelp B.J."/>
        </authorList>
    </citation>
    <scope>INDUCTION</scope>
</reference>
<reference key="7">
    <citation type="journal article" date="2009" name="Physiol. Plantarum">
        <title>Ethylene and salicylic acid control glutathione biosynthesis in ozone-exposed Arabidopsis thaliana.</title>
        <authorList>
            <person name="Yoshida S."/>
            <person name="Tamaoki M."/>
            <person name="Ioki M."/>
            <person name="Ogawa D."/>
            <person name="Sato Y."/>
            <person name="Aono M."/>
            <person name="Kubo A."/>
            <person name="Saji S."/>
            <person name="Saji H."/>
            <person name="Satoh S."/>
            <person name="Nakajima N."/>
        </authorList>
    </citation>
    <scope>INDUCTION</scope>
</reference>
<feature type="transit peptide" description="Chloroplast" evidence="3">
    <location>
        <begin position="1"/>
        <end position="44"/>
    </location>
</feature>
<feature type="chain" id="PRO_0000421033" description="Glyoxylate/succinic semialdehyde reductase 2, chloroplastic">
    <location>
        <begin position="45"/>
        <end position="358"/>
    </location>
</feature>
<feature type="active site" evidence="1">
    <location>
        <position position="236"/>
    </location>
</feature>
<feature type="binding site" evidence="2">
    <location>
        <begin position="70"/>
        <end position="84"/>
    </location>
    <ligand>
        <name>NADP(+)</name>
        <dbReference type="ChEBI" id="CHEBI:58349"/>
    </ligand>
</feature>
<feature type="binding site" evidence="2">
    <location>
        <position position="161"/>
    </location>
    <ligand>
        <name>NADP(+)</name>
        <dbReference type="ChEBI" id="CHEBI:58349"/>
    </ligand>
</feature>
<feature type="binding site" evidence="2">
    <location>
        <position position="304"/>
    </location>
    <ligand>
        <name>NADP(+)</name>
        <dbReference type="ChEBI" id="CHEBI:58349"/>
    </ligand>
</feature>
<name>GLYR2_ARATH</name>